<organism>
    <name type="scientific">Arabidopsis thaliana</name>
    <name type="common">Mouse-ear cress</name>
    <dbReference type="NCBI Taxonomy" id="3702"/>
    <lineage>
        <taxon>Eukaryota</taxon>
        <taxon>Viridiplantae</taxon>
        <taxon>Streptophyta</taxon>
        <taxon>Embryophyta</taxon>
        <taxon>Tracheophyta</taxon>
        <taxon>Spermatophyta</taxon>
        <taxon>Magnoliopsida</taxon>
        <taxon>eudicotyledons</taxon>
        <taxon>Gunneridae</taxon>
        <taxon>Pentapetalae</taxon>
        <taxon>rosids</taxon>
        <taxon>malvids</taxon>
        <taxon>Brassicales</taxon>
        <taxon>Brassicaceae</taxon>
        <taxon>Camelineae</taxon>
        <taxon>Arabidopsis</taxon>
    </lineage>
</organism>
<dbReference type="EMBL" id="AF296835">
    <property type="status" value="NOT_ANNOTATED_CDS"/>
    <property type="molecule type" value="Genomic_DNA"/>
</dbReference>
<dbReference type="EMBL" id="CP002688">
    <property type="protein sequence ID" value="AED93787.1"/>
    <property type="molecule type" value="Genomic_DNA"/>
</dbReference>
<dbReference type="EMBL" id="AF386963">
    <property type="protein sequence ID" value="AAK62408.1"/>
    <property type="status" value="ALT_INIT"/>
    <property type="molecule type" value="mRNA"/>
</dbReference>
<dbReference type="EMBL" id="AY081484">
    <property type="protein sequence ID" value="AAM10046.1"/>
    <property type="molecule type" value="mRNA"/>
</dbReference>
<dbReference type="EMBL" id="BT000461">
    <property type="protein sequence ID" value="AAN17438.1"/>
    <property type="molecule type" value="mRNA"/>
</dbReference>
<dbReference type="EMBL" id="BT008389">
    <property type="protein sequence ID" value="AAP37748.1"/>
    <property type="molecule type" value="mRNA"/>
</dbReference>
<dbReference type="EMBL" id="AK227285">
    <property type="protein sequence ID" value="BAE99307.1"/>
    <property type="molecule type" value="mRNA"/>
</dbReference>
<dbReference type="RefSeq" id="NP_568506.2">
    <property type="nucleotide sequence ID" value="NM_122713.3"/>
</dbReference>
<dbReference type="SMR" id="Q8H181"/>
<dbReference type="BioGRID" id="18187">
    <property type="interactions" value="4"/>
</dbReference>
<dbReference type="FunCoup" id="Q8H181">
    <property type="interactions" value="40"/>
</dbReference>
<dbReference type="IntAct" id="Q8H181">
    <property type="interactions" value="3"/>
</dbReference>
<dbReference type="STRING" id="3702.Q8H181"/>
<dbReference type="iPTMnet" id="Q8H181"/>
<dbReference type="PaxDb" id="3702-AT5G28300.1"/>
<dbReference type="ProteomicsDB" id="247305"/>
<dbReference type="EnsemblPlants" id="AT5G28300.1">
    <property type="protein sequence ID" value="AT5G28300.1"/>
    <property type="gene ID" value="AT5G28300"/>
</dbReference>
<dbReference type="GeneID" id="832914"/>
<dbReference type="Gramene" id="AT5G28300.1">
    <property type="protein sequence ID" value="AT5G28300.1"/>
    <property type="gene ID" value="AT5G28300"/>
</dbReference>
<dbReference type="KEGG" id="ath:AT5G28300"/>
<dbReference type="Araport" id="AT5G28300"/>
<dbReference type="TAIR" id="AT5G28300">
    <property type="gene designation" value="GT2L"/>
</dbReference>
<dbReference type="eggNOG" id="KOG4282">
    <property type="taxonomic scope" value="Eukaryota"/>
</dbReference>
<dbReference type="HOGENOM" id="CLU_469642_0_0_1"/>
<dbReference type="InParanoid" id="Q8H181"/>
<dbReference type="OMA" id="NETNMVQ"/>
<dbReference type="PhylomeDB" id="Q8H181"/>
<dbReference type="PRO" id="PR:Q8H181"/>
<dbReference type="Proteomes" id="UP000006548">
    <property type="component" value="Chromosome 5"/>
</dbReference>
<dbReference type="ExpressionAtlas" id="Q8H181">
    <property type="expression patterns" value="baseline and differential"/>
</dbReference>
<dbReference type="GO" id="GO:0005634">
    <property type="term" value="C:nucleus"/>
    <property type="evidence" value="ECO:0000314"/>
    <property type="project" value="TAIR"/>
</dbReference>
<dbReference type="GO" id="GO:0005516">
    <property type="term" value="F:calmodulin binding"/>
    <property type="evidence" value="ECO:0000314"/>
    <property type="project" value="TAIR"/>
</dbReference>
<dbReference type="GO" id="GO:0000987">
    <property type="term" value="F:cis-regulatory region sequence-specific DNA binding"/>
    <property type="evidence" value="ECO:0000314"/>
    <property type="project" value="TAIR"/>
</dbReference>
<dbReference type="GO" id="GO:0003700">
    <property type="term" value="F:DNA-binding transcription factor activity"/>
    <property type="evidence" value="ECO:0000250"/>
    <property type="project" value="TAIR"/>
</dbReference>
<dbReference type="GO" id="GO:0045893">
    <property type="term" value="P:positive regulation of DNA-templated transcription"/>
    <property type="evidence" value="ECO:0000314"/>
    <property type="project" value="TAIR"/>
</dbReference>
<dbReference type="GO" id="GO:0006355">
    <property type="term" value="P:regulation of DNA-templated transcription"/>
    <property type="evidence" value="ECO:0000304"/>
    <property type="project" value="TAIR"/>
</dbReference>
<dbReference type="CDD" id="cd12203">
    <property type="entry name" value="GT1"/>
    <property type="match status" value="1"/>
</dbReference>
<dbReference type="Gene3D" id="1.10.10.60">
    <property type="entry name" value="Homeodomain-like"/>
    <property type="match status" value="2"/>
</dbReference>
<dbReference type="InterPro" id="IPR044822">
    <property type="entry name" value="Myb_DNA-bind_4"/>
</dbReference>
<dbReference type="InterPro" id="IPR001005">
    <property type="entry name" value="SANT/Myb"/>
</dbReference>
<dbReference type="PANTHER" id="PTHR21654">
    <property type="entry name" value="FI21293P1"/>
    <property type="match status" value="1"/>
</dbReference>
<dbReference type="PANTHER" id="PTHR21654:SF61">
    <property type="entry name" value="TRIHELIX TRANSCRIPTION FACTOR GTL2"/>
    <property type="match status" value="1"/>
</dbReference>
<dbReference type="Pfam" id="PF13837">
    <property type="entry name" value="Myb_DNA-bind_4"/>
    <property type="match status" value="2"/>
</dbReference>
<dbReference type="PROSITE" id="PS50090">
    <property type="entry name" value="MYB_LIKE"/>
    <property type="match status" value="2"/>
</dbReference>
<feature type="chain" id="PRO_0000405799" description="Trihelix transcription factor GTL2">
    <location>
        <begin position="1"/>
        <end position="619"/>
    </location>
</feature>
<feature type="domain" description="Myb-like 1" evidence="3">
    <location>
        <begin position="102"/>
        <end position="154"/>
    </location>
</feature>
<feature type="domain" description="Myb-like 2" evidence="3">
    <location>
        <begin position="459"/>
        <end position="526"/>
    </location>
</feature>
<feature type="region of interest" description="Disordered" evidence="4">
    <location>
        <begin position="11"/>
        <end position="41"/>
    </location>
</feature>
<feature type="region of interest" description="Disordered" evidence="4">
    <location>
        <begin position="62"/>
        <end position="100"/>
    </location>
</feature>
<feature type="region of interest" description="Disordered" evidence="4">
    <location>
        <begin position="382"/>
        <end position="414"/>
    </location>
</feature>
<feature type="region of interest" description="Disordered" evidence="4">
    <location>
        <begin position="434"/>
        <end position="458"/>
    </location>
</feature>
<feature type="region of interest" description="Disordered" evidence="4">
    <location>
        <begin position="557"/>
        <end position="619"/>
    </location>
</feature>
<feature type="coiled-coil region" evidence="2">
    <location>
        <begin position="307"/>
        <end position="361"/>
    </location>
</feature>
<feature type="short sequence motif" description="Nuclear localization signal" evidence="1">
    <location>
        <begin position="503"/>
        <end position="510"/>
    </location>
</feature>
<feature type="compositionally biased region" description="Pro residues" evidence="4">
    <location>
        <begin position="16"/>
        <end position="27"/>
    </location>
</feature>
<feature type="compositionally biased region" description="Polar residues" evidence="4">
    <location>
        <begin position="384"/>
        <end position="396"/>
    </location>
</feature>
<feature type="compositionally biased region" description="Low complexity" evidence="4">
    <location>
        <begin position="435"/>
        <end position="444"/>
    </location>
</feature>
<feature type="compositionally biased region" description="Basic and acidic residues" evidence="4">
    <location>
        <begin position="448"/>
        <end position="458"/>
    </location>
</feature>
<feature type="compositionally biased region" description="Low complexity" evidence="4">
    <location>
        <begin position="561"/>
        <end position="574"/>
    </location>
</feature>
<feature type="compositionally biased region" description="Basic and acidic residues" evidence="4">
    <location>
        <begin position="575"/>
        <end position="585"/>
    </location>
</feature>
<feature type="sequence conflict" description="In Ref. 4; BAE99307." evidence="5" ref="4">
    <original>I</original>
    <variation>V</variation>
    <location>
        <position position="280"/>
    </location>
</feature>
<sequence length="619" mass="71280">MFDGGVPEQIHRFIASPPPPPPLPPHQPAAERSLPFPVSFSSFNTNHQPQHMLSLDSRKIIHHHHHHHHHDIKDGGATTGEWIGQTDHDDSDNHHQHHHHHPWCSDEVLALLRFRSTVENWFPEFTWEHTSRKLAEVGFKRSPQECKEKFEEEERRYFNSNNNNNNNTNDHQHIGNYNNKGNNYRIFSEVEEFYHHGHDNEHVSSEVGDNQNKRTNLVEGKGNVGETVQDLMAEDKLRDQDQGQVEEASMENQRNSIEVGKVGNVEDDAKSSSSSSLMMIMKEKKRKKRKKEKERFGVLKGFCEGLVRNMIAQQEEMHKKLLEDMVKKEEEKIAREEAWKKQEIERVNKEVEIRAQEQAMASDRNTNIIKFISKFTDHDLDVVQNPTSPSQDSSSLALRKTQGRRKFQTSSSLLPQTLTPHNLLTIDKSLEPFSTKTLKPKNQNPKPPKSDDKSDLGKRWPKDEVLALINIRRSISNMNDDDHKDENSLSTSSKAVPLWERISKKMLEIGYKRSAKRCKEKWENINKYFRKTKDVNKKRPLDSRTCPYFHQLTALYSQPPTGTTATTATTATSARDLDTRPEENRVGSQDPDISVPMHVDGDGAGDKSNVQFSGFDLEF</sequence>
<comment type="function">
    <text evidence="1">Probable transcription factor that binds specific DNA sequence.</text>
</comment>
<comment type="subcellular location">
    <subcellularLocation>
        <location evidence="1">Nucleus</location>
    </subcellularLocation>
</comment>
<comment type="sequence caution" evidence="5">
    <conflict type="erroneous initiation">
        <sequence resource="EMBL-CDS" id="AAK62408"/>
    </conflict>
    <text>Truncated N-terminus.</text>
</comment>
<accession>Q8H181</accession>
<accession>Q0WU91</accession>
<accession>Q94F19</accession>
<keyword id="KW-0175">Coiled coil</keyword>
<keyword id="KW-0238">DNA-binding</keyword>
<keyword id="KW-0539">Nucleus</keyword>
<keyword id="KW-1185">Reference proteome</keyword>
<keyword id="KW-0677">Repeat</keyword>
<keyword id="KW-0804">Transcription</keyword>
<keyword id="KW-0805">Transcription regulation</keyword>
<reference key="1">
    <citation type="journal article" date="2000" name="Nature">
        <title>Sequence and analysis of chromosome 5 of the plant Arabidopsis thaliana.</title>
        <authorList>
            <person name="Tabata S."/>
            <person name="Kaneko T."/>
            <person name="Nakamura Y."/>
            <person name="Kotani H."/>
            <person name="Kato T."/>
            <person name="Asamizu E."/>
            <person name="Miyajima N."/>
            <person name="Sasamoto S."/>
            <person name="Kimura T."/>
            <person name="Hosouchi T."/>
            <person name="Kawashima K."/>
            <person name="Kohara M."/>
            <person name="Matsumoto M."/>
            <person name="Matsuno A."/>
            <person name="Muraki A."/>
            <person name="Nakayama S."/>
            <person name="Nakazaki N."/>
            <person name="Naruo K."/>
            <person name="Okumura S."/>
            <person name="Shinpo S."/>
            <person name="Takeuchi C."/>
            <person name="Wada T."/>
            <person name="Watanabe A."/>
            <person name="Yamada M."/>
            <person name="Yasuda M."/>
            <person name="Sato S."/>
            <person name="de la Bastide M."/>
            <person name="Huang E."/>
            <person name="Spiegel L."/>
            <person name="Gnoj L."/>
            <person name="O'Shaughnessy A."/>
            <person name="Preston R."/>
            <person name="Habermann K."/>
            <person name="Murray J."/>
            <person name="Johnson D."/>
            <person name="Rohlfing T."/>
            <person name="Nelson J."/>
            <person name="Stoneking T."/>
            <person name="Pepin K."/>
            <person name="Spieth J."/>
            <person name="Sekhon M."/>
            <person name="Armstrong J."/>
            <person name="Becker M."/>
            <person name="Belter E."/>
            <person name="Cordum H."/>
            <person name="Cordes M."/>
            <person name="Courtney L."/>
            <person name="Courtney W."/>
            <person name="Dante M."/>
            <person name="Du H."/>
            <person name="Edwards J."/>
            <person name="Fryman J."/>
            <person name="Haakensen B."/>
            <person name="Lamar E."/>
            <person name="Latreille P."/>
            <person name="Leonard S."/>
            <person name="Meyer R."/>
            <person name="Mulvaney E."/>
            <person name="Ozersky P."/>
            <person name="Riley A."/>
            <person name="Strowmatt C."/>
            <person name="Wagner-McPherson C."/>
            <person name="Wollam A."/>
            <person name="Yoakum M."/>
            <person name="Bell M."/>
            <person name="Dedhia N."/>
            <person name="Parnell L."/>
            <person name="Shah R."/>
            <person name="Rodriguez M."/>
            <person name="Hoon See L."/>
            <person name="Vil D."/>
            <person name="Baker J."/>
            <person name="Kirchoff K."/>
            <person name="Toth K."/>
            <person name="King L."/>
            <person name="Bahret A."/>
            <person name="Miller B."/>
            <person name="Marra M.A."/>
            <person name="Martienssen R."/>
            <person name="McCombie W.R."/>
            <person name="Wilson R.K."/>
            <person name="Murphy G."/>
            <person name="Bancroft I."/>
            <person name="Volckaert G."/>
            <person name="Wambutt R."/>
            <person name="Duesterhoeft A."/>
            <person name="Stiekema W."/>
            <person name="Pohl T."/>
            <person name="Entian K.-D."/>
            <person name="Terryn N."/>
            <person name="Hartley N."/>
            <person name="Bent E."/>
            <person name="Johnson S."/>
            <person name="Langham S.-A."/>
            <person name="McCullagh B."/>
            <person name="Robben J."/>
            <person name="Grymonprez B."/>
            <person name="Zimmermann W."/>
            <person name="Ramsperger U."/>
            <person name="Wedler H."/>
            <person name="Balke K."/>
            <person name="Wedler E."/>
            <person name="Peters S."/>
            <person name="van Staveren M."/>
            <person name="Dirkse W."/>
            <person name="Mooijman P."/>
            <person name="Klein Lankhorst R."/>
            <person name="Weitzenegger T."/>
            <person name="Bothe G."/>
            <person name="Rose M."/>
            <person name="Hauf J."/>
            <person name="Berneiser S."/>
            <person name="Hempel S."/>
            <person name="Feldpausch M."/>
            <person name="Lamberth S."/>
            <person name="Villarroel R."/>
            <person name="Gielen J."/>
            <person name="Ardiles W."/>
            <person name="Bents O."/>
            <person name="Lemcke K."/>
            <person name="Kolesov G."/>
            <person name="Mayer K.F.X."/>
            <person name="Rudd S."/>
            <person name="Schoof H."/>
            <person name="Schueller C."/>
            <person name="Zaccaria P."/>
            <person name="Mewes H.-W."/>
            <person name="Bevan M."/>
            <person name="Fransz P.F."/>
        </authorList>
    </citation>
    <scope>NUCLEOTIDE SEQUENCE [LARGE SCALE GENOMIC DNA]</scope>
    <source>
        <strain>cv. Columbia</strain>
    </source>
</reference>
<reference key="2">
    <citation type="journal article" date="2017" name="Plant J.">
        <title>Araport11: a complete reannotation of the Arabidopsis thaliana reference genome.</title>
        <authorList>
            <person name="Cheng C.Y."/>
            <person name="Krishnakumar V."/>
            <person name="Chan A.P."/>
            <person name="Thibaud-Nissen F."/>
            <person name="Schobel S."/>
            <person name="Town C.D."/>
        </authorList>
    </citation>
    <scope>GENOME REANNOTATION</scope>
    <source>
        <strain>cv. Columbia</strain>
    </source>
</reference>
<reference key="3">
    <citation type="journal article" date="2003" name="Science">
        <title>Empirical analysis of transcriptional activity in the Arabidopsis genome.</title>
        <authorList>
            <person name="Yamada K."/>
            <person name="Lim J."/>
            <person name="Dale J.M."/>
            <person name="Chen H."/>
            <person name="Shinn P."/>
            <person name="Palm C.J."/>
            <person name="Southwick A.M."/>
            <person name="Wu H.C."/>
            <person name="Kim C.J."/>
            <person name="Nguyen M."/>
            <person name="Pham P.K."/>
            <person name="Cheuk R.F."/>
            <person name="Karlin-Newmann G."/>
            <person name="Liu S.X."/>
            <person name="Lam B."/>
            <person name="Sakano H."/>
            <person name="Wu T."/>
            <person name="Yu G."/>
            <person name="Miranda M."/>
            <person name="Quach H.L."/>
            <person name="Tripp M."/>
            <person name="Chang C.H."/>
            <person name="Lee J.M."/>
            <person name="Toriumi M.J."/>
            <person name="Chan M.M."/>
            <person name="Tang C.C."/>
            <person name="Onodera C.S."/>
            <person name="Deng J.M."/>
            <person name="Akiyama K."/>
            <person name="Ansari Y."/>
            <person name="Arakawa T."/>
            <person name="Banh J."/>
            <person name="Banno F."/>
            <person name="Bowser L."/>
            <person name="Brooks S.Y."/>
            <person name="Carninci P."/>
            <person name="Chao Q."/>
            <person name="Choy N."/>
            <person name="Enju A."/>
            <person name="Goldsmith A.D."/>
            <person name="Gurjal M."/>
            <person name="Hansen N.F."/>
            <person name="Hayashizaki Y."/>
            <person name="Johnson-Hopson C."/>
            <person name="Hsuan V.W."/>
            <person name="Iida K."/>
            <person name="Karnes M."/>
            <person name="Khan S."/>
            <person name="Koesema E."/>
            <person name="Ishida J."/>
            <person name="Jiang P.X."/>
            <person name="Jones T."/>
            <person name="Kawai J."/>
            <person name="Kamiya A."/>
            <person name="Meyers C."/>
            <person name="Nakajima M."/>
            <person name="Narusaka M."/>
            <person name="Seki M."/>
            <person name="Sakurai T."/>
            <person name="Satou M."/>
            <person name="Tamse R."/>
            <person name="Vaysberg M."/>
            <person name="Wallender E.K."/>
            <person name="Wong C."/>
            <person name="Yamamura Y."/>
            <person name="Yuan S."/>
            <person name="Shinozaki K."/>
            <person name="Davis R.W."/>
            <person name="Theologis A."/>
            <person name="Ecker J.R."/>
        </authorList>
    </citation>
    <scope>NUCLEOTIDE SEQUENCE [LARGE SCALE MRNA]</scope>
    <source>
        <strain>cv. Columbia</strain>
    </source>
</reference>
<reference key="4">
    <citation type="submission" date="2006-07" db="EMBL/GenBank/DDBJ databases">
        <title>Large-scale analysis of RIKEN Arabidopsis full-length (RAFL) cDNAs.</title>
        <authorList>
            <person name="Totoki Y."/>
            <person name="Seki M."/>
            <person name="Ishida J."/>
            <person name="Nakajima M."/>
            <person name="Enju A."/>
            <person name="Kamiya A."/>
            <person name="Narusaka M."/>
            <person name="Shin-i T."/>
            <person name="Nakagawa M."/>
            <person name="Sakamoto N."/>
            <person name="Oishi K."/>
            <person name="Kohara Y."/>
            <person name="Kobayashi M."/>
            <person name="Toyoda A."/>
            <person name="Sakaki Y."/>
            <person name="Sakurai T."/>
            <person name="Iida K."/>
            <person name="Akiyama K."/>
            <person name="Satou M."/>
            <person name="Toyoda T."/>
            <person name="Konagaya A."/>
            <person name="Carninci P."/>
            <person name="Kawai J."/>
            <person name="Hayashizaki Y."/>
            <person name="Shinozaki K."/>
        </authorList>
    </citation>
    <scope>NUCLEOTIDE SEQUENCE [LARGE SCALE MRNA]</scope>
    <source>
        <strain>cv. Columbia</strain>
    </source>
</reference>
<name>GTL2_ARATH</name>
<protein>
    <recommendedName>
        <fullName>Trihelix transcription factor GTL2</fullName>
    </recommendedName>
    <alternativeName>
        <fullName>GT2-LIKE protein 2</fullName>
        <shortName>AtGTL2</shortName>
    </alternativeName>
    <alternativeName>
        <fullName>Trihelix DNA-binding protein GTL2</fullName>
    </alternativeName>
</protein>
<proteinExistence type="evidence at transcript level"/>
<gene>
    <name type="ordered locus">At5g28300</name>
    <name type="ORF">T8M17.70</name>
</gene>
<evidence type="ECO:0000250" key="1"/>
<evidence type="ECO:0000255" key="2"/>
<evidence type="ECO:0000255" key="3">
    <source>
        <dbReference type="PROSITE-ProRule" id="PRU00133"/>
    </source>
</evidence>
<evidence type="ECO:0000256" key="4">
    <source>
        <dbReference type="SAM" id="MobiDB-lite"/>
    </source>
</evidence>
<evidence type="ECO:0000305" key="5"/>